<organism>
    <name type="scientific">Influenza A virus (strain A/Kiev/59/1979 H1N1)</name>
    <dbReference type="NCBI Taxonomy" id="384495"/>
    <lineage>
        <taxon>Viruses</taxon>
        <taxon>Riboviria</taxon>
        <taxon>Orthornavirae</taxon>
        <taxon>Negarnaviricota</taxon>
        <taxon>Polyploviricotina</taxon>
        <taxon>Insthoviricetes</taxon>
        <taxon>Articulavirales</taxon>
        <taxon>Orthomyxoviridae</taxon>
        <taxon>Alphainfluenzavirus</taxon>
        <taxon>Alphainfluenzavirus influenzae</taxon>
        <taxon>Influenza A virus</taxon>
    </lineage>
</organism>
<sequence>MDVNPTLLFLKVPAQNAISTTFPYTGDPPYSHGTGTGYTMDTVNRTHQYSEKGKWTTNTETGAPQLNPIDGPLPEDNEPSGYAQTDCVLEAMAFLEESHPGIFENSCLETMEVVQQTRVDRLTQGRQTYDWTLNRNQPAATALANTIEVFRSNGLTANESGRLIDFLKDVMESMDKEEIEITTHFQRKRRVRDNMTKKMVTQRTIGKKKQRVNKRSYLIRALTLNTMTKDAERGKLKRRAIATPGMQIRGFVYFVETLARSICEKLEQSGLPVGGNEKKAKLANVVRKMMTNSQDTELSFTITGDNTKWNENQNPRMFLAMITYITKNQPEWFRNILSIAPIMFSNKMARLGKGYMFESKRMKLRTQIPAEMLASIDLKYFNESTRKKIEKIRPLLIDGTASLSPGMMMGMFNMLSTVLGVSILNLGQKKYTKTTYWWDGLQSSDDFALIVNAPNHEGIQAGVDRFYRTCKLVGINMSKKKSYINRTGTFEFTSFFYRYGFVANFSMELPSFGVSGINESADMSIGVTVIKNNMINNDLGPATAQMALQLFIKDYRYTYRCHRGDTQIQTRRSFELKKLWEQTRSKAGLLVSDGGPNLYNIRNLHIPEVCLKWELMDEDYQGRLCNPLNPFVSHKEIESVNNAVVMPAHGPAKSMEYDAVATTHSWIPKRNRSILNTSQRGILEDEQMYQKCCNLFEKFFPSSSYRRPVGISSMVEAMVSRARIDARIDFESGRIKKEEFSEIMKICSTIEELRRQK</sequence>
<reference key="1">
    <citation type="journal article" date="1987" name="Bioorg. Khim.">
        <title>Primary structure of the full-size DNA copy of the influenza virus A/Kiev/59/79 (H1N1) PB1 gene protein.</title>
        <authorList>
            <person name="Petrov N.A."/>
            <person name="Golovin S.Y."/>
            <person name="Mamaev L.V."/>
            <person name="Netesov S.V."/>
            <person name="Vasilenko S.K."/>
        </authorList>
    </citation>
    <scope>NUCLEOTIDE SEQUENCE [GENOMIC RNA]</scope>
</reference>
<comment type="function">
    <text evidence="2">RNA-dependent RNA polymerase which is responsible for replication and transcription of virus RNA segments. The transcription of viral mRNAs occurs by a unique mechanism called cap-snatching. 5' methylated caps of cellular mRNAs are cleaved after 10-13 nucleotides by PA. In turn, these short capped RNAs are used as primers by PB1 for transcription of viral mRNAs. During virus replication, PB1 initiates RNA synthesis and copy vRNA into complementary RNA (cRNA) which in turn serves as a template for the production of more vRNAs.</text>
</comment>
<comment type="catalytic activity">
    <reaction evidence="2">
        <text>RNA(n) + a ribonucleoside 5'-triphosphate = RNA(n+1) + diphosphate</text>
        <dbReference type="Rhea" id="RHEA:21248"/>
        <dbReference type="Rhea" id="RHEA-COMP:14527"/>
        <dbReference type="Rhea" id="RHEA-COMP:17342"/>
        <dbReference type="ChEBI" id="CHEBI:33019"/>
        <dbReference type="ChEBI" id="CHEBI:61557"/>
        <dbReference type="ChEBI" id="CHEBI:140395"/>
        <dbReference type="EC" id="2.7.7.48"/>
    </reaction>
</comment>
<comment type="subunit">
    <text evidence="1 2">Influenza RNA polymerase is composed of three subunits: PB1, PB2 and PA. Interacts (via N-terminus) with PA (via C-terminus). Interacts (via C-terminus) with PB2 (via N-terminus); this interaction is essential for transcription initiation. Interacts (via C-terminus) with human PKP2 (via N-terminus); the interaction competitively inhibits the interaction between the RNA polymerase subunits PB1 and PB2 (By similarity).</text>
</comment>
<comment type="subcellular location">
    <subcellularLocation>
        <location evidence="2">Host nucleus</location>
    </subcellularLocation>
    <subcellularLocation>
        <location evidence="2">Host cytoplasm</location>
    </subcellularLocation>
</comment>
<comment type="PTM">
    <text evidence="2">Phosphorylated by host PRKCA.</text>
</comment>
<comment type="similarity">
    <text evidence="2">Belongs to the influenza viruses polymerase PB1 family.</text>
</comment>
<keyword id="KW-1262">Eukaryotic host gene expression shutoff by virus</keyword>
<keyword id="KW-1191">Eukaryotic host transcription shutoff by virus</keyword>
<keyword id="KW-1035">Host cytoplasm</keyword>
<keyword id="KW-1190">Host gene expression shutoff by virus</keyword>
<keyword id="KW-1048">Host nucleus</keyword>
<keyword id="KW-0945">Host-virus interaction</keyword>
<keyword id="KW-1104">Inhibition of host RNA polymerase II by virus</keyword>
<keyword id="KW-0547">Nucleotide-binding</keyword>
<keyword id="KW-0548">Nucleotidyltransferase</keyword>
<keyword id="KW-0597">Phosphoprotein</keyword>
<keyword id="KW-0696">RNA-directed RNA polymerase</keyword>
<keyword id="KW-0808">Transferase</keyword>
<keyword id="KW-0693">Viral RNA replication</keyword>
<keyword id="KW-1195">Viral transcription</keyword>
<accession>P18882</accession>
<evidence type="ECO:0000250" key="1">
    <source>
        <dbReference type="UniProtKB" id="P03431"/>
    </source>
</evidence>
<evidence type="ECO:0000255" key="2">
    <source>
        <dbReference type="HAMAP-Rule" id="MF_04065"/>
    </source>
</evidence>
<evidence type="ECO:0000256" key="3">
    <source>
        <dbReference type="SAM" id="MobiDB-lite"/>
    </source>
</evidence>
<organismHost>
    <name type="scientific">Aves</name>
    <dbReference type="NCBI Taxonomy" id="8782"/>
</organismHost>
<organismHost>
    <name type="scientific">Homo sapiens</name>
    <name type="common">Human</name>
    <dbReference type="NCBI Taxonomy" id="9606"/>
</organismHost>
<organismHost>
    <name type="scientific">Sus scrofa</name>
    <name type="common">Pig</name>
    <dbReference type="NCBI Taxonomy" id="9823"/>
</organismHost>
<gene>
    <name evidence="2" type="primary">PB1</name>
</gene>
<name>RDRP_I79A4</name>
<feature type="chain" id="PRO_0000078754" description="RNA-directed RNA polymerase catalytic subunit">
    <location>
        <begin position="1"/>
        <end position="757"/>
    </location>
</feature>
<feature type="domain" description="RdRp catalytic" evidence="2">
    <location>
        <begin position="286"/>
        <end position="483"/>
    </location>
</feature>
<feature type="region of interest" description="Disordered" evidence="3">
    <location>
        <begin position="50"/>
        <end position="82"/>
    </location>
</feature>
<feature type="region of interest" description="Promoter-binding site" evidence="2">
    <location>
        <begin position="249"/>
        <end position="256"/>
    </location>
</feature>
<feature type="short sequence motif" description="Nuclear localization signal" evidence="2">
    <location>
        <begin position="187"/>
        <end position="195"/>
    </location>
</feature>
<feature type="short sequence motif" description="Nuclear localization signal" evidence="2">
    <location>
        <begin position="203"/>
        <end position="216"/>
    </location>
</feature>
<feature type="compositionally biased region" description="Polar residues" evidence="3">
    <location>
        <begin position="55"/>
        <end position="64"/>
    </location>
</feature>
<dbReference type="EC" id="2.7.7.48" evidence="2"/>
<dbReference type="EMBL" id="M38376">
    <property type="protein sequence ID" value="AAA43647.1"/>
    <property type="molecule type" value="Genomic_RNA"/>
</dbReference>
<dbReference type="PIR" id="S06212">
    <property type="entry name" value="S06212"/>
</dbReference>
<dbReference type="SMR" id="P18882"/>
<dbReference type="GO" id="GO:0030430">
    <property type="term" value="C:host cell cytoplasm"/>
    <property type="evidence" value="ECO:0007669"/>
    <property type="project" value="UniProtKB-SubCell"/>
</dbReference>
<dbReference type="GO" id="GO:0042025">
    <property type="term" value="C:host cell nucleus"/>
    <property type="evidence" value="ECO:0007669"/>
    <property type="project" value="UniProtKB-SubCell"/>
</dbReference>
<dbReference type="GO" id="GO:0000166">
    <property type="term" value="F:nucleotide binding"/>
    <property type="evidence" value="ECO:0007669"/>
    <property type="project" value="UniProtKB-UniRule"/>
</dbReference>
<dbReference type="GO" id="GO:0003723">
    <property type="term" value="F:RNA binding"/>
    <property type="evidence" value="ECO:0007669"/>
    <property type="project" value="InterPro"/>
</dbReference>
<dbReference type="GO" id="GO:0003968">
    <property type="term" value="F:RNA-directed RNA polymerase activity"/>
    <property type="evidence" value="ECO:0007669"/>
    <property type="project" value="UniProtKB-UniRule"/>
</dbReference>
<dbReference type="GO" id="GO:0006351">
    <property type="term" value="P:DNA-templated transcription"/>
    <property type="evidence" value="ECO:0007669"/>
    <property type="project" value="UniProtKB-UniRule"/>
</dbReference>
<dbReference type="GO" id="GO:0039657">
    <property type="term" value="P:symbiont-mediated suppression of host gene expression"/>
    <property type="evidence" value="ECO:0007669"/>
    <property type="project" value="UniProtKB-KW"/>
</dbReference>
<dbReference type="GO" id="GO:0039523">
    <property type="term" value="P:symbiont-mediated suppression of host mRNA transcription via inhibition of RNA polymerase II activity"/>
    <property type="evidence" value="ECO:0007669"/>
    <property type="project" value="UniProtKB-UniRule"/>
</dbReference>
<dbReference type="GO" id="GO:0039694">
    <property type="term" value="P:viral RNA genome replication"/>
    <property type="evidence" value="ECO:0007669"/>
    <property type="project" value="UniProtKB-UniRule"/>
</dbReference>
<dbReference type="GO" id="GO:0019083">
    <property type="term" value="P:viral transcription"/>
    <property type="evidence" value="ECO:0007669"/>
    <property type="project" value="UniProtKB-KW"/>
</dbReference>
<dbReference type="Gene3D" id="6.10.140.720">
    <property type="match status" value="1"/>
</dbReference>
<dbReference type="HAMAP" id="MF_04065">
    <property type="entry name" value="INFV_RDRP"/>
    <property type="match status" value="1"/>
</dbReference>
<dbReference type="InterPro" id="IPR007099">
    <property type="entry name" value="RNA-dir_pol_NSvirus"/>
</dbReference>
<dbReference type="InterPro" id="IPR001407">
    <property type="entry name" value="RNA_pol_PB1_influenza"/>
</dbReference>
<dbReference type="Pfam" id="PF00602">
    <property type="entry name" value="Flu_PB1"/>
    <property type="match status" value="1"/>
</dbReference>
<dbReference type="PIRSF" id="PIRSF000827">
    <property type="entry name" value="RdRPol_OMV"/>
    <property type="match status" value="1"/>
</dbReference>
<dbReference type="PROSITE" id="PS50525">
    <property type="entry name" value="RDRP_SSRNA_NEG_SEG"/>
    <property type="match status" value="1"/>
</dbReference>
<protein>
    <recommendedName>
        <fullName evidence="2">RNA-directed RNA polymerase catalytic subunit</fullName>
        <ecNumber evidence="2">2.7.7.48</ecNumber>
    </recommendedName>
    <alternativeName>
        <fullName evidence="2">Polymerase basic protein 1</fullName>
        <shortName evidence="2">PB1</shortName>
    </alternativeName>
    <alternativeName>
        <fullName evidence="2">RNA-directed RNA polymerase subunit P1</fullName>
    </alternativeName>
</protein>
<proteinExistence type="inferred from homology"/>